<comment type="function">
    <text evidence="1">Cell division inhibitor that blocks the formation of polar Z ring septums. Rapidly oscillates between the poles of the cell to destabilize FtsZ filaments that have formed before they mature into polar Z rings. Prevents FtsZ polymerization.</text>
</comment>
<comment type="subunit">
    <text evidence="1">Interacts with MinD and FtsZ.</text>
</comment>
<comment type="similarity">
    <text evidence="1">Belongs to the MinC family.</text>
</comment>
<dbReference type="EMBL" id="CP000572">
    <property type="protein sequence ID" value="ABN89345.1"/>
    <property type="molecule type" value="Genomic_DNA"/>
</dbReference>
<dbReference type="RefSeq" id="WP_004522312.1">
    <property type="nucleotide sequence ID" value="NC_009076.1"/>
</dbReference>
<dbReference type="SMR" id="A3NY52"/>
<dbReference type="GeneID" id="93061172"/>
<dbReference type="KEGG" id="bpl:BURPS1106A_3033"/>
<dbReference type="HOGENOM" id="CLU_067812_0_0_4"/>
<dbReference type="Proteomes" id="UP000006738">
    <property type="component" value="Chromosome I"/>
</dbReference>
<dbReference type="GO" id="GO:0000902">
    <property type="term" value="P:cell morphogenesis"/>
    <property type="evidence" value="ECO:0007669"/>
    <property type="project" value="InterPro"/>
</dbReference>
<dbReference type="GO" id="GO:0000917">
    <property type="term" value="P:division septum assembly"/>
    <property type="evidence" value="ECO:0007669"/>
    <property type="project" value="UniProtKB-KW"/>
</dbReference>
<dbReference type="GO" id="GO:0051302">
    <property type="term" value="P:regulation of cell division"/>
    <property type="evidence" value="ECO:0007669"/>
    <property type="project" value="InterPro"/>
</dbReference>
<dbReference type="GO" id="GO:1901891">
    <property type="term" value="P:regulation of cell septum assembly"/>
    <property type="evidence" value="ECO:0007669"/>
    <property type="project" value="InterPro"/>
</dbReference>
<dbReference type="Gene3D" id="2.160.20.70">
    <property type="match status" value="1"/>
</dbReference>
<dbReference type="Gene3D" id="3.30.70.260">
    <property type="match status" value="1"/>
</dbReference>
<dbReference type="HAMAP" id="MF_00267">
    <property type="entry name" value="MinC"/>
    <property type="match status" value="1"/>
</dbReference>
<dbReference type="InterPro" id="IPR016098">
    <property type="entry name" value="CAP/MinC_C"/>
</dbReference>
<dbReference type="InterPro" id="IPR013033">
    <property type="entry name" value="MinC"/>
</dbReference>
<dbReference type="InterPro" id="IPR036145">
    <property type="entry name" value="MinC_C_sf"/>
</dbReference>
<dbReference type="InterPro" id="IPR007874">
    <property type="entry name" value="MinC_N"/>
</dbReference>
<dbReference type="InterPro" id="IPR005526">
    <property type="entry name" value="Septum_form_inhib_MinC_C"/>
</dbReference>
<dbReference type="NCBIfam" id="TIGR01222">
    <property type="entry name" value="minC"/>
    <property type="match status" value="1"/>
</dbReference>
<dbReference type="PANTHER" id="PTHR34108">
    <property type="entry name" value="SEPTUM SITE-DETERMINING PROTEIN MINC"/>
    <property type="match status" value="1"/>
</dbReference>
<dbReference type="PANTHER" id="PTHR34108:SF1">
    <property type="entry name" value="SEPTUM SITE-DETERMINING PROTEIN MINC"/>
    <property type="match status" value="1"/>
</dbReference>
<dbReference type="Pfam" id="PF03775">
    <property type="entry name" value="MinC_C"/>
    <property type="match status" value="1"/>
</dbReference>
<dbReference type="Pfam" id="PF05209">
    <property type="entry name" value="MinC_N"/>
    <property type="match status" value="1"/>
</dbReference>
<dbReference type="SUPFAM" id="SSF63848">
    <property type="entry name" value="Cell-division inhibitor MinC, C-terminal domain"/>
    <property type="match status" value="1"/>
</dbReference>
<gene>
    <name evidence="1" type="primary">minC</name>
    <name type="ordered locus">BURPS1106A_3033</name>
</gene>
<name>MINC_BURP0</name>
<accession>A3NY52</accession>
<reference key="1">
    <citation type="journal article" date="2010" name="Genome Biol. Evol.">
        <title>Continuing evolution of Burkholderia mallei through genome reduction and large-scale rearrangements.</title>
        <authorList>
            <person name="Losada L."/>
            <person name="Ronning C.M."/>
            <person name="DeShazer D."/>
            <person name="Woods D."/>
            <person name="Fedorova N."/>
            <person name="Kim H.S."/>
            <person name="Shabalina S.A."/>
            <person name="Pearson T.R."/>
            <person name="Brinkac L."/>
            <person name="Tan P."/>
            <person name="Nandi T."/>
            <person name="Crabtree J."/>
            <person name="Badger J."/>
            <person name="Beckstrom-Sternberg S."/>
            <person name="Saqib M."/>
            <person name="Schutzer S.E."/>
            <person name="Keim P."/>
            <person name="Nierman W.C."/>
        </authorList>
    </citation>
    <scope>NUCLEOTIDE SEQUENCE [LARGE SCALE GENOMIC DNA]</scope>
    <source>
        <strain>1106a</strain>
    </source>
</reference>
<sequence length="270" mass="28931">MSLKKSPFFELRSGSVDTLLFIVKTADLDALRAELVKRFEATPEFFADDVVAIDVRRLADHERVPLDDIRGMLNDVRMRAIGVVAQPEQHAWAASAGLPLLEARDRRAPSSKAADEAPVQQAEPAAPAAGQAALFEQAGPTLADAGAPPESPAPAVAAQSATLVVDRPLRSGQQIYAKGDLVVLGPVSYGAEVIAEGNIHIYAPLRGRALAGVHGNHDARIFCTCLEPELISIAGIYRTTENPLPADVLGKSVQIRLEQEKLMIEPLRLT</sequence>
<organism>
    <name type="scientific">Burkholderia pseudomallei (strain 1106a)</name>
    <dbReference type="NCBI Taxonomy" id="357348"/>
    <lineage>
        <taxon>Bacteria</taxon>
        <taxon>Pseudomonadati</taxon>
        <taxon>Pseudomonadota</taxon>
        <taxon>Betaproteobacteria</taxon>
        <taxon>Burkholderiales</taxon>
        <taxon>Burkholderiaceae</taxon>
        <taxon>Burkholderia</taxon>
        <taxon>pseudomallei group</taxon>
    </lineage>
</organism>
<feature type="chain" id="PRO_1000047814" description="Probable septum site-determining protein MinC">
    <location>
        <begin position="1"/>
        <end position="270"/>
    </location>
</feature>
<feature type="region of interest" description="Disordered" evidence="2">
    <location>
        <begin position="105"/>
        <end position="129"/>
    </location>
</feature>
<feature type="compositionally biased region" description="Low complexity" evidence="2">
    <location>
        <begin position="116"/>
        <end position="129"/>
    </location>
</feature>
<evidence type="ECO:0000255" key="1">
    <source>
        <dbReference type="HAMAP-Rule" id="MF_00267"/>
    </source>
</evidence>
<evidence type="ECO:0000256" key="2">
    <source>
        <dbReference type="SAM" id="MobiDB-lite"/>
    </source>
</evidence>
<keyword id="KW-0131">Cell cycle</keyword>
<keyword id="KW-0132">Cell division</keyword>
<keyword id="KW-0717">Septation</keyword>
<proteinExistence type="inferred from homology"/>
<protein>
    <recommendedName>
        <fullName evidence="1">Probable septum site-determining protein MinC</fullName>
    </recommendedName>
</protein>